<organism>
    <name type="scientific">Platanus occidentalis</name>
    <name type="common">Sycamore</name>
    <name type="synonym">American plane tree</name>
    <dbReference type="NCBI Taxonomy" id="4403"/>
    <lineage>
        <taxon>Eukaryota</taxon>
        <taxon>Viridiplantae</taxon>
        <taxon>Streptophyta</taxon>
        <taxon>Embryophyta</taxon>
        <taxon>Tracheophyta</taxon>
        <taxon>Spermatophyta</taxon>
        <taxon>Magnoliopsida</taxon>
        <taxon>Proteales</taxon>
        <taxon>Platanaceae</taxon>
        <taxon>Platanus</taxon>
    </lineage>
</organism>
<keyword id="KW-0150">Chloroplast</keyword>
<keyword id="KW-0472">Membrane</keyword>
<keyword id="KW-0520">NAD</keyword>
<keyword id="KW-0521">NADP</keyword>
<keyword id="KW-0934">Plastid</keyword>
<keyword id="KW-0618">Plastoquinone</keyword>
<keyword id="KW-0874">Quinone</keyword>
<keyword id="KW-0793">Thylakoid</keyword>
<keyword id="KW-1278">Translocase</keyword>
<keyword id="KW-0812">Transmembrane</keyword>
<keyword id="KW-1133">Transmembrane helix</keyword>
<keyword id="KW-0813">Transport</keyword>
<dbReference type="EC" id="7.1.1.-" evidence="1"/>
<dbReference type="EMBL" id="DQ923116">
    <property type="protein sequence ID" value="ABI49824.1"/>
    <property type="molecule type" value="Genomic_DNA"/>
</dbReference>
<dbReference type="SMR" id="P0CD32"/>
<dbReference type="GO" id="GO:0009535">
    <property type="term" value="C:chloroplast thylakoid membrane"/>
    <property type="evidence" value="ECO:0007669"/>
    <property type="project" value="UniProtKB-SubCell"/>
</dbReference>
<dbReference type="GO" id="GO:0008137">
    <property type="term" value="F:NADH dehydrogenase (ubiquinone) activity"/>
    <property type="evidence" value="ECO:0007669"/>
    <property type="project" value="InterPro"/>
</dbReference>
<dbReference type="GO" id="GO:0048038">
    <property type="term" value="F:quinone binding"/>
    <property type="evidence" value="ECO:0007669"/>
    <property type="project" value="UniProtKB-KW"/>
</dbReference>
<dbReference type="GO" id="GO:0042773">
    <property type="term" value="P:ATP synthesis coupled electron transport"/>
    <property type="evidence" value="ECO:0007669"/>
    <property type="project" value="InterPro"/>
</dbReference>
<dbReference type="GO" id="GO:0019684">
    <property type="term" value="P:photosynthesis, light reaction"/>
    <property type="evidence" value="ECO:0007669"/>
    <property type="project" value="UniProtKB-UniRule"/>
</dbReference>
<dbReference type="HAMAP" id="MF_00445">
    <property type="entry name" value="NDH1_NuoN_1"/>
    <property type="match status" value="1"/>
</dbReference>
<dbReference type="InterPro" id="IPR010096">
    <property type="entry name" value="NADH-Q_OxRdtase_suN/2"/>
</dbReference>
<dbReference type="InterPro" id="IPR001750">
    <property type="entry name" value="ND/Mrp_TM"/>
</dbReference>
<dbReference type="InterPro" id="IPR045693">
    <property type="entry name" value="Ndh2_N"/>
</dbReference>
<dbReference type="NCBIfam" id="TIGR01770">
    <property type="entry name" value="NDH_I_N"/>
    <property type="match status" value="1"/>
</dbReference>
<dbReference type="NCBIfam" id="NF002701">
    <property type="entry name" value="PRK02504.1"/>
    <property type="match status" value="1"/>
</dbReference>
<dbReference type="PANTHER" id="PTHR22773">
    <property type="entry name" value="NADH DEHYDROGENASE"/>
    <property type="match status" value="1"/>
</dbReference>
<dbReference type="Pfam" id="PF19530">
    <property type="entry name" value="Ndh2_N"/>
    <property type="match status" value="1"/>
</dbReference>
<dbReference type="Pfam" id="PF00361">
    <property type="entry name" value="Proton_antipo_M"/>
    <property type="match status" value="1"/>
</dbReference>
<dbReference type="PRINTS" id="PR01434">
    <property type="entry name" value="NADHDHGNASE5"/>
</dbReference>
<comment type="function">
    <text evidence="1">NDH shuttles electrons from NAD(P)H:plastoquinone, via FMN and iron-sulfur (Fe-S) centers, to quinones in the photosynthetic chain and possibly in a chloroplast respiratory chain. The immediate electron acceptor for the enzyme in this species is believed to be plastoquinone. Couples the redox reaction to proton translocation, and thus conserves the redox energy in a proton gradient.</text>
</comment>
<comment type="catalytic activity">
    <reaction evidence="1">
        <text>a plastoquinone + NADH + (n+1) H(+)(in) = a plastoquinol + NAD(+) + n H(+)(out)</text>
        <dbReference type="Rhea" id="RHEA:42608"/>
        <dbReference type="Rhea" id="RHEA-COMP:9561"/>
        <dbReference type="Rhea" id="RHEA-COMP:9562"/>
        <dbReference type="ChEBI" id="CHEBI:15378"/>
        <dbReference type="ChEBI" id="CHEBI:17757"/>
        <dbReference type="ChEBI" id="CHEBI:57540"/>
        <dbReference type="ChEBI" id="CHEBI:57945"/>
        <dbReference type="ChEBI" id="CHEBI:62192"/>
    </reaction>
</comment>
<comment type="catalytic activity">
    <reaction evidence="1">
        <text>a plastoquinone + NADPH + (n+1) H(+)(in) = a plastoquinol + NADP(+) + n H(+)(out)</text>
        <dbReference type="Rhea" id="RHEA:42612"/>
        <dbReference type="Rhea" id="RHEA-COMP:9561"/>
        <dbReference type="Rhea" id="RHEA-COMP:9562"/>
        <dbReference type="ChEBI" id="CHEBI:15378"/>
        <dbReference type="ChEBI" id="CHEBI:17757"/>
        <dbReference type="ChEBI" id="CHEBI:57783"/>
        <dbReference type="ChEBI" id="CHEBI:58349"/>
        <dbReference type="ChEBI" id="CHEBI:62192"/>
    </reaction>
</comment>
<comment type="subunit">
    <text evidence="1">NDH is composed of at least 16 different subunits, 5 of which are encoded in the nucleus.</text>
</comment>
<comment type="subcellular location">
    <subcellularLocation>
        <location evidence="1">Plastid</location>
        <location evidence="1">Chloroplast thylakoid membrane</location>
        <topology evidence="1">Multi-pass membrane protein</topology>
    </subcellularLocation>
</comment>
<comment type="similarity">
    <text evidence="1">Belongs to the complex I subunit 2 family.</text>
</comment>
<feature type="chain" id="PRO_0000344280" description="NAD(P)H-quinone oxidoreductase subunit 2 A, chloroplastic">
    <location>
        <begin position="1"/>
        <end position="510"/>
    </location>
</feature>
<feature type="transmembrane region" description="Helical" evidence="1">
    <location>
        <begin position="24"/>
        <end position="44"/>
    </location>
</feature>
<feature type="transmembrane region" description="Helical" evidence="1">
    <location>
        <begin position="57"/>
        <end position="77"/>
    </location>
</feature>
<feature type="transmembrane region" description="Helical" evidence="1">
    <location>
        <begin position="99"/>
        <end position="119"/>
    </location>
</feature>
<feature type="transmembrane region" description="Helical" evidence="1">
    <location>
        <begin position="124"/>
        <end position="144"/>
    </location>
</feature>
<feature type="transmembrane region" description="Helical" evidence="1">
    <location>
        <begin position="149"/>
        <end position="169"/>
    </location>
</feature>
<feature type="transmembrane region" description="Helical" evidence="1">
    <location>
        <begin position="183"/>
        <end position="203"/>
    </location>
</feature>
<feature type="transmembrane region" description="Helical" evidence="1">
    <location>
        <begin position="227"/>
        <end position="247"/>
    </location>
</feature>
<feature type="transmembrane region" description="Helical" evidence="1">
    <location>
        <begin position="295"/>
        <end position="315"/>
    </location>
</feature>
<feature type="transmembrane region" description="Helical" evidence="1">
    <location>
        <begin position="323"/>
        <end position="343"/>
    </location>
</feature>
<feature type="transmembrane region" description="Helical" evidence="1">
    <location>
        <begin position="347"/>
        <end position="367"/>
    </location>
</feature>
<feature type="transmembrane region" description="Helical" evidence="1">
    <location>
        <begin position="395"/>
        <end position="415"/>
    </location>
</feature>
<feature type="transmembrane region" description="Helical" evidence="1">
    <location>
        <begin position="418"/>
        <end position="438"/>
    </location>
</feature>
<feature type="transmembrane region" description="Helical" evidence="1">
    <location>
        <begin position="484"/>
        <end position="504"/>
    </location>
</feature>
<geneLocation type="chloroplast"/>
<proteinExistence type="inferred from homology"/>
<reference key="1">
    <citation type="journal article" date="2006" name="BMC Plant Biol.">
        <title>Rapid and accurate pyrosequencing of angiosperm plastid genomes.</title>
        <authorList>
            <person name="Moore M.J."/>
            <person name="Dhingra A."/>
            <person name="Soltis P.S."/>
            <person name="Shaw R."/>
            <person name="Farmerie W.G."/>
            <person name="Folta K.M."/>
            <person name="Soltis D.E."/>
        </authorList>
    </citation>
    <scope>NUCLEOTIDE SEQUENCE [LARGE SCALE GENOMIC DNA]</scope>
</reference>
<accession>P0CD32</accession>
<accession>Q09FY6</accession>
<name>NU2C1_PLAOC</name>
<gene>
    <name evidence="1" type="primary">ndhB1</name>
</gene>
<protein>
    <recommendedName>
        <fullName evidence="1">NAD(P)H-quinone oxidoreductase subunit 2 A, chloroplastic</fullName>
        <ecNumber evidence="1">7.1.1.-</ecNumber>
    </recommendedName>
    <alternativeName>
        <fullName evidence="1">NAD(P)H dehydrogenase, subunit 2 A</fullName>
    </alternativeName>
    <alternativeName>
        <fullName evidence="1">NADH-plastoquinone oxidoreductase subunit 2 A</fullName>
    </alternativeName>
</protein>
<sequence>MIWHVQNENFILDSTRIFMKAFHLLLFHGSFIFPECILIFGLILLLMIDSTSDQKDIPWLYFISSTSLVMSITALLFRWREEPMISFSGNFQTNNFNEIFQFLILLCSTLCIPLSVEYIECTEMAITEFLLFVLTATLGGMFLCGANDLITIFVAPECFSLCSYLLSGYTKRDVRSNEATTKYLLMGGASSSILVHGFSWLYGSSGGEIELQEIVNGLINTQMYNSPGISIALIFITVGIGFKLSPAPSHQWTPDVYEGSPTPVVAFLSVTSKVAASASATRIFDIPFYFSSNEWHLLLEILAILSMILGNLIAITQTSMKRMLAYSSIGQIGYVIIGIIVGDSNDGYASMITYMLFYISMNLGTFARIVSFGLRTGTDNIRDYAGLYTKDPFLALSSALCLLSLGGLPPLAGFFGKLHLFWCGWQAGLYFLVSIGLLTSVVSIYYYLKIIKLLMTGRNQEITPHVRNYRRSPLRSNNSIELSMIVCVIASTIPGISMNPIIAIAQDTLF</sequence>
<evidence type="ECO:0000255" key="1">
    <source>
        <dbReference type="HAMAP-Rule" id="MF_00445"/>
    </source>
</evidence>